<dbReference type="EMBL" id="CP001956">
    <property type="protein sequence ID" value="ADE04817.1"/>
    <property type="molecule type" value="Genomic_DNA"/>
</dbReference>
<dbReference type="EMBL" id="AOHU01000097">
    <property type="protein sequence ID" value="ELY26392.1"/>
    <property type="molecule type" value="Genomic_DNA"/>
</dbReference>
<dbReference type="RefSeq" id="WP_004044192.1">
    <property type="nucleotide sequence ID" value="NC_013967.1"/>
</dbReference>
<dbReference type="PDB" id="4B45">
    <property type="method" value="X-ray"/>
    <property type="resolution" value="2.10 A"/>
    <property type="chains" value="A=1-349, B=350-360"/>
</dbReference>
<dbReference type="PDBsum" id="4B45"/>
<dbReference type="SMR" id="D4GTC1"/>
<dbReference type="STRING" id="309800.HVO_0745"/>
<dbReference type="PaxDb" id="309800-C498_15008"/>
<dbReference type="EnsemblBacteria" id="ADE04817">
    <property type="protein sequence ID" value="ADE04817"/>
    <property type="gene ID" value="HVO_0745"/>
</dbReference>
<dbReference type="GeneID" id="8925085"/>
<dbReference type="KEGG" id="hvo:HVO_0745"/>
<dbReference type="PATRIC" id="fig|309800.29.peg.2896"/>
<dbReference type="eggNOG" id="arCOG02202">
    <property type="taxonomic scope" value="Archaea"/>
</dbReference>
<dbReference type="HOGENOM" id="CLU_058152_0_0_2"/>
<dbReference type="OrthoDB" id="329751at2157"/>
<dbReference type="EvolutionaryTrace" id="D4GTC1"/>
<dbReference type="Proteomes" id="UP000008243">
    <property type="component" value="Chromosome"/>
</dbReference>
<dbReference type="Proteomes" id="UP000011532">
    <property type="component" value="Unassembled WGS sequence"/>
</dbReference>
<dbReference type="GO" id="GO:0032153">
    <property type="term" value="C:cell division site"/>
    <property type="evidence" value="ECO:0007669"/>
    <property type="project" value="TreeGrafter"/>
</dbReference>
<dbReference type="GO" id="GO:0005737">
    <property type="term" value="C:cytoplasm"/>
    <property type="evidence" value="ECO:0007669"/>
    <property type="project" value="UniProtKB-SubCell"/>
</dbReference>
<dbReference type="GO" id="GO:0005525">
    <property type="term" value="F:GTP binding"/>
    <property type="evidence" value="ECO:0007669"/>
    <property type="project" value="UniProtKB-UniRule"/>
</dbReference>
<dbReference type="GO" id="GO:0003924">
    <property type="term" value="F:GTPase activity"/>
    <property type="evidence" value="ECO:0007669"/>
    <property type="project" value="InterPro"/>
</dbReference>
<dbReference type="GO" id="GO:0051301">
    <property type="term" value="P:cell division"/>
    <property type="evidence" value="ECO:0007669"/>
    <property type="project" value="TreeGrafter"/>
</dbReference>
<dbReference type="GO" id="GO:0008360">
    <property type="term" value="P:regulation of cell shape"/>
    <property type="evidence" value="ECO:0007669"/>
    <property type="project" value="UniProtKB-UniRule"/>
</dbReference>
<dbReference type="CDD" id="cd02191">
    <property type="entry name" value="FtsZ_CetZ-like"/>
    <property type="match status" value="1"/>
</dbReference>
<dbReference type="Gene3D" id="3.30.1330.20">
    <property type="entry name" value="Tubulin/FtsZ, C-terminal domain"/>
    <property type="match status" value="1"/>
</dbReference>
<dbReference type="Gene3D" id="3.40.50.1440">
    <property type="entry name" value="Tubulin/FtsZ, GTPase domain"/>
    <property type="match status" value="1"/>
</dbReference>
<dbReference type="HAMAP" id="MF_01946">
    <property type="entry name" value="CetZ"/>
    <property type="match status" value="1"/>
</dbReference>
<dbReference type="InterPro" id="IPR032907">
    <property type="entry name" value="CetZ"/>
</dbReference>
<dbReference type="InterPro" id="IPR048737">
    <property type="entry name" value="CetZ_C"/>
</dbReference>
<dbReference type="InterPro" id="IPR045061">
    <property type="entry name" value="FtsZ/CetZ"/>
</dbReference>
<dbReference type="InterPro" id="IPR037103">
    <property type="entry name" value="Tubulin/FtsZ-like_C"/>
</dbReference>
<dbReference type="InterPro" id="IPR036525">
    <property type="entry name" value="Tubulin/FtsZ_GTPase_sf"/>
</dbReference>
<dbReference type="InterPro" id="IPR003008">
    <property type="entry name" value="Tubulin_FtsZ_GTPase"/>
</dbReference>
<dbReference type="PANTHER" id="PTHR30314">
    <property type="entry name" value="CELL DIVISION PROTEIN FTSZ-RELATED"/>
    <property type="match status" value="1"/>
</dbReference>
<dbReference type="PANTHER" id="PTHR30314:SF10">
    <property type="entry name" value="TUBULIN-LIKE PROTEIN CETZ"/>
    <property type="match status" value="1"/>
</dbReference>
<dbReference type="Pfam" id="PF21011">
    <property type="entry name" value="CetZ_C"/>
    <property type="match status" value="1"/>
</dbReference>
<dbReference type="Pfam" id="PF00091">
    <property type="entry name" value="Tubulin"/>
    <property type="match status" value="1"/>
</dbReference>
<dbReference type="PRINTS" id="PR00423">
    <property type="entry name" value="CELLDVISFTSZ"/>
</dbReference>
<dbReference type="SMART" id="SM00864">
    <property type="entry name" value="Tubulin"/>
    <property type="match status" value="1"/>
</dbReference>
<dbReference type="SUPFAM" id="SSF52490">
    <property type="entry name" value="Tubulin nucleotide-binding domain-like"/>
    <property type="match status" value="1"/>
</dbReference>
<proteinExistence type="evidence at protein level"/>
<organism>
    <name type="scientific">Haloferax volcanii (strain ATCC 29605 / DSM 3757 / JCM 8879 / NBRC 14742 / NCIMB 2012 / VKM B-1768 / DS2)</name>
    <name type="common">Halobacterium volcanii</name>
    <dbReference type="NCBI Taxonomy" id="309800"/>
    <lineage>
        <taxon>Archaea</taxon>
        <taxon>Methanobacteriati</taxon>
        <taxon>Methanobacteriota</taxon>
        <taxon>Stenosarchaea group</taxon>
        <taxon>Halobacteria</taxon>
        <taxon>Halobacteriales</taxon>
        <taxon>Haloferacaceae</taxon>
        <taxon>Haloferax</taxon>
    </lineage>
</organism>
<gene>
    <name evidence="4" type="primary">cetZ2</name>
    <name evidence="6" type="synonym">ftsZ3</name>
    <name evidence="6" type="ordered locus">HVO_0745</name>
    <name evidence="7" type="ORF">C498_15008</name>
</gene>
<evidence type="ECO:0000255" key="1">
    <source>
        <dbReference type="HAMAP-Rule" id="MF_01946"/>
    </source>
</evidence>
<evidence type="ECO:0000256" key="2">
    <source>
        <dbReference type="SAM" id="MobiDB-lite"/>
    </source>
</evidence>
<evidence type="ECO:0000269" key="3">
    <source>
    </source>
</evidence>
<evidence type="ECO:0000303" key="4">
    <source>
    </source>
</evidence>
<evidence type="ECO:0000305" key="5"/>
<evidence type="ECO:0000312" key="6">
    <source>
        <dbReference type="EMBL" id="ADE04817.1"/>
    </source>
</evidence>
<evidence type="ECO:0000312" key="7">
    <source>
        <dbReference type="EMBL" id="ELY26392.1"/>
    </source>
</evidence>
<evidence type="ECO:0007829" key="8">
    <source>
        <dbReference type="PDB" id="4B45"/>
    </source>
</evidence>
<feature type="chain" id="PRO_0000432184" description="Tubulin-like protein CetZ2">
    <location>
        <begin position="1"/>
        <end position="360"/>
    </location>
</feature>
<feature type="region of interest" description="Disordered" evidence="2">
    <location>
        <begin position="334"/>
        <end position="360"/>
    </location>
</feature>
<feature type="compositionally biased region" description="Basic and acidic residues" evidence="2">
    <location>
        <begin position="334"/>
        <end position="354"/>
    </location>
</feature>
<feature type="binding site" evidence="1 3">
    <location>
        <begin position="10"/>
        <end position="14"/>
    </location>
    <ligand>
        <name>GTP</name>
        <dbReference type="ChEBI" id="CHEBI:37565"/>
    </ligand>
</feature>
<feature type="binding site" evidence="3">
    <location>
        <begin position="65"/>
        <end position="66"/>
    </location>
    <ligand>
        <name>GTP</name>
        <dbReference type="ChEBI" id="CHEBI:37565"/>
    </ligand>
</feature>
<feature type="binding site" evidence="1 3">
    <location>
        <begin position="106"/>
        <end position="108"/>
    </location>
    <ligand>
        <name>GTP</name>
        <dbReference type="ChEBI" id="CHEBI:37565"/>
    </ligand>
</feature>
<feature type="binding site" evidence="1 3">
    <location>
        <position position="138"/>
    </location>
    <ligand>
        <name>GTP</name>
        <dbReference type="ChEBI" id="CHEBI:37565"/>
    </ligand>
</feature>
<feature type="binding site" evidence="1 3">
    <location>
        <position position="165"/>
    </location>
    <ligand>
        <name>GTP</name>
        <dbReference type="ChEBI" id="CHEBI:37565"/>
    </ligand>
</feature>
<feature type="binding site" evidence="1 3">
    <location>
        <position position="183"/>
    </location>
    <ligand>
        <name>GTP</name>
        <dbReference type="ChEBI" id="CHEBI:37565"/>
    </ligand>
</feature>
<feature type="mutagenesis site" description="Reduces motility. Produces a high-curvature phenotype." evidence="3">
    <original>E</original>
    <variation>A</variation>
    <location>
        <position position="212"/>
    </location>
</feature>
<feature type="strand" evidence="8">
    <location>
        <begin position="3"/>
        <end position="8"/>
    </location>
</feature>
<feature type="helix" evidence="8">
    <location>
        <begin position="9"/>
        <end position="25"/>
    </location>
</feature>
<feature type="strand" evidence="8">
    <location>
        <begin position="31"/>
        <end position="40"/>
    </location>
</feature>
<feature type="helix" evidence="8">
    <location>
        <begin position="41"/>
        <end position="45"/>
    </location>
</feature>
<feature type="strand" evidence="8">
    <location>
        <begin position="48"/>
        <end position="53"/>
    </location>
</feature>
<feature type="helix" evidence="8">
    <location>
        <begin position="56"/>
        <end position="59"/>
    </location>
</feature>
<feature type="helix" evidence="8">
    <location>
        <begin position="68"/>
        <end position="85"/>
    </location>
</feature>
<feature type="turn" evidence="8">
    <location>
        <begin position="86"/>
        <end position="89"/>
    </location>
</feature>
<feature type="strand" evidence="8">
    <location>
        <begin position="96"/>
        <end position="102"/>
    </location>
</feature>
<feature type="helix" evidence="8">
    <location>
        <begin position="107"/>
        <end position="120"/>
    </location>
</feature>
<feature type="strand" evidence="8">
    <location>
        <begin position="127"/>
        <end position="133"/>
    </location>
</feature>
<feature type="helix" evidence="8">
    <location>
        <begin position="140"/>
        <end position="156"/>
    </location>
</feature>
<feature type="strand" evidence="8">
    <location>
        <begin position="157"/>
        <end position="164"/>
    </location>
</feature>
<feature type="helix" evidence="8">
    <location>
        <begin position="165"/>
        <end position="167"/>
    </location>
</feature>
<feature type="helix" evidence="8">
    <location>
        <begin position="175"/>
        <end position="196"/>
    </location>
</feature>
<feature type="helix" evidence="8">
    <location>
        <begin position="210"/>
        <end position="217"/>
    </location>
</feature>
<feature type="strand" evidence="8">
    <location>
        <begin position="221"/>
        <end position="231"/>
    </location>
</feature>
<feature type="helix" evidence="8">
    <location>
        <begin position="236"/>
        <end position="239"/>
    </location>
</feature>
<feature type="helix" evidence="8">
    <location>
        <begin position="240"/>
        <end position="252"/>
    </location>
</feature>
<feature type="strand" evidence="8">
    <location>
        <begin position="254"/>
        <end position="259"/>
    </location>
</feature>
<feature type="strand" evidence="8">
    <location>
        <begin position="262"/>
        <end position="272"/>
    </location>
</feature>
<feature type="helix" evidence="8">
    <location>
        <begin position="274"/>
        <end position="276"/>
    </location>
</feature>
<feature type="helix" evidence="8">
    <location>
        <begin position="279"/>
        <end position="293"/>
    </location>
</feature>
<feature type="strand" evidence="8">
    <location>
        <begin position="298"/>
        <end position="305"/>
    </location>
</feature>
<feature type="strand" evidence="8">
    <location>
        <begin position="308"/>
        <end position="319"/>
    </location>
</feature>
<feature type="helix" evidence="8">
    <location>
        <begin position="323"/>
        <end position="340"/>
    </location>
</feature>
<feature type="strand" evidence="8">
    <location>
        <begin position="355"/>
        <end position="357"/>
    </location>
</feature>
<protein>
    <recommendedName>
        <fullName evidence="5">Tubulin-like protein CetZ2</fullName>
    </recommendedName>
    <alternativeName>
        <fullName evidence="4">Cell-structure-related euryarchaeota tubulin/FtsZ homolog 2</fullName>
    </alternativeName>
</protein>
<comment type="function">
    <text evidence="1 3">Involved in cell shape control.</text>
</comment>
<comment type="subcellular location">
    <subcellularLocation>
        <location evidence="1">Cytoplasm</location>
    </subcellularLocation>
</comment>
<comment type="disruption phenotype">
    <text evidence="3">Does not affect motility. No differences in growth rate or cell size.</text>
</comment>
<comment type="similarity">
    <text evidence="1 5">Belongs to the CetZ family.</text>
</comment>
<name>CETZ2_HALVD</name>
<reference key="1">
    <citation type="journal article" date="2010" name="PLoS ONE">
        <title>The complete genome sequence of Haloferax volcanii DS2, a model archaeon.</title>
        <authorList>
            <person name="Hartman A.L."/>
            <person name="Norais C."/>
            <person name="Badger J.H."/>
            <person name="Delmas S."/>
            <person name="Haldenby S."/>
            <person name="Madupu R."/>
            <person name="Robinson J."/>
            <person name="Khouri H."/>
            <person name="Ren Q."/>
            <person name="Lowe T.M."/>
            <person name="Maupin-Furlow J."/>
            <person name="Pohlschroder M."/>
            <person name="Daniels C."/>
            <person name="Pfeiffer F."/>
            <person name="Allers T."/>
            <person name="Eisen J.A."/>
        </authorList>
    </citation>
    <scope>NUCLEOTIDE SEQUENCE [LARGE SCALE GENOMIC DNA]</scope>
    <source>
        <strain>ATCC 29605 / DSM 3757 / JCM 8879 / NBRC 14742 / NCIMB 2012 / VKM B-1768 / DS2</strain>
    </source>
</reference>
<reference key="2">
    <citation type="journal article" date="2014" name="PLoS Genet.">
        <title>Phylogenetically driven sequencing of extremely halophilic archaea reveals strategies for static and dynamic osmo-response.</title>
        <authorList>
            <person name="Becker E.A."/>
            <person name="Seitzer P.M."/>
            <person name="Tritt A."/>
            <person name="Larsen D."/>
            <person name="Krusor M."/>
            <person name="Yao A.I."/>
            <person name="Wu D."/>
            <person name="Madern D."/>
            <person name="Eisen J.A."/>
            <person name="Darling A.E."/>
            <person name="Facciotti M.T."/>
        </authorList>
    </citation>
    <scope>NUCLEOTIDE SEQUENCE [LARGE SCALE GENOMIC DNA]</scope>
    <source>
        <strain>ATCC 29605 / DSM 3757 / JCM 8879 / NBRC 14742 / NCIMB 2012 / VKM B-1768 / DS2</strain>
    </source>
</reference>
<reference key="3">
    <citation type="journal article" date="2015" name="Nature">
        <title>CetZ tubulin-like proteins control archaeal cell shape.</title>
        <authorList>
            <person name="Duggin I.G."/>
            <person name="Aylett C.H."/>
            <person name="Walsh J.C."/>
            <person name="Michie K.A."/>
            <person name="Wang Q."/>
            <person name="Turnbull L."/>
            <person name="Dawson E.M."/>
            <person name="Harry E.J."/>
            <person name="Whitchurch C.B."/>
            <person name="Amos L.A."/>
            <person name="Loewe J."/>
        </authorList>
    </citation>
    <scope>X-RAY CRYSTALLOGRAPHY (2.10 ANGSTROMS) OF 1-349 AND 350-360 IN COMPLEX WITH GTP ANALOG</scope>
    <scope>FUNCTION</scope>
    <scope>DISRUPTION PHENOTYPE</scope>
    <scope>MUTAGENESIS OF GLU-212</scope>
</reference>
<accession>D4GTC1</accession>
<keyword id="KW-0002">3D-structure</keyword>
<keyword id="KW-0133">Cell shape</keyword>
<keyword id="KW-0963">Cytoplasm</keyword>
<keyword id="KW-0342">GTP-binding</keyword>
<keyword id="KW-0547">Nucleotide-binding</keyword>
<keyword id="KW-1185">Reference proteome</keyword>
<sequence length="360" mass="37109">MKTVLIGVGQAGGKLASALQSFDRQTGFGAVLDAVAVNTAKADLQSLPVETVLIGQDRVNGHGVGGDNELGAAVMESDQTEVMSALDGRVTAEAESIFVVAGLGGGSGSGGAPVLAKALAGVYDVPVYVLGILPGADEGALYQVNAGRSLKTVAREADAVLLVDNDAFRSAGESMSEGYDAINEAIARRVGLLLAAGEATEGVGESVVDTSEVINTLRSGGIAALGYASAEASPNAEDNINAVMSTTRRAVLTGTSLPDASDADAALVVIAGEPDTIPRKGVERARRWVEDETGSMQVRGGDFPLESGRLASLVLLGGVERSERVESFMERAREAIDKAETEPREDPKGMWHSDDLDDLL</sequence>